<dbReference type="EMBL" id="CP000038">
    <property type="protein sequence ID" value="AAZ90021.1"/>
    <property type="molecule type" value="Genomic_DNA"/>
</dbReference>
<dbReference type="RefSeq" id="WP_000617544.1">
    <property type="nucleotide sequence ID" value="NC_007384.1"/>
</dbReference>
<dbReference type="SMR" id="Q3YWU1"/>
<dbReference type="GeneID" id="93778669"/>
<dbReference type="KEGG" id="ssn:SSON_3459"/>
<dbReference type="HOGENOM" id="CLU_037562_3_1_6"/>
<dbReference type="Proteomes" id="UP000002529">
    <property type="component" value="Chromosome"/>
</dbReference>
<dbReference type="GO" id="GO:1990904">
    <property type="term" value="C:ribonucleoprotein complex"/>
    <property type="evidence" value="ECO:0007669"/>
    <property type="project" value="UniProtKB-KW"/>
</dbReference>
<dbReference type="GO" id="GO:0005840">
    <property type="term" value="C:ribosome"/>
    <property type="evidence" value="ECO:0007669"/>
    <property type="project" value="UniProtKB-KW"/>
</dbReference>
<dbReference type="GO" id="GO:0019843">
    <property type="term" value="F:rRNA binding"/>
    <property type="evidence" value="ECO:0007669"/>
    <property type="project" value="UniProtKB-UniRule"/>
</dbReference>
<dbReference type="GO" id="GO:0003735">
    <property type="term" value="F:structural constituent of ribosome"/>
    <property type="evidence" value="ECO:0007669"/>
    <property type="project" value="InterPro"/>
</dbReference>
<dbReference type="GO" id="GO:0006412">
    <property type="term" value="P:translation"/>
    <property type="evidence" value="ECO:0007669"/>
    <property type="project" value="UniProtKB-UniRule"/>
</dbReference>
<dbReference type="FunFam" id="3.30.70.330:FF:000001">
    <property type="entry name" value="50S ribosomal protein L23"/>
    <property type="match status" value="1"/>
</dbReference>
<dbReference type="Gene3D" id="3.30.70.330">
    <property type="match status" value="1"/>
</dbReference>
<dbReference type="HAMAP" id="MF_01369_B">
    <property type="entry name" value="Ribosomal_uL23_B"/>
    <property type="match status" value="1"/>
</dbReference>
<dbReference type="InterPro" id="IPR012677">
    <property type="entry name" value="Nucleotide-bd_a/b_plait_sf"/>
</dbReference>
<dbReference type="InterPro" id="IPR013025">
    <property type="entry name" value="Ribosomal_uL23-like"/>
</dbReference>
<dbReference type="InterPro" id="IPR012678">
    <property type="entry name" value="Ribosomal_uL23/eL15/eS24_sf"/>
</dbReference>
<dbReference type="InterPro" id="IPR001014">
    <property type="entry name" value="Ribosomal_uL23_CS"/>
</dbReference>
<dbReference type="NCBIfam" id="NF004358">
    <property type="entry name" value="PRK05738.1-1"/>
    <property type="match status" value="1"/>
</dbReference>
<dbReference type="NCBIfam" id="NF004359">
    <property type="entry name" value="PRK05738.1-3"/>
    <property type="match status" value="1"/>
</dbReference>
<dbReference type="NCBIfam" id="NF004363">
    <property type="entry name" value="PRK05738.2-4"/>
    <property type="match status" value="1"/>
</dbReference>
<dbReference type="PANTHER" id="PTHR11620">
    <property type="entry name" value="60S RIBOSOMAL PROTEIN L23A"/>
    <property type="match status" value="1"/>
</dbReference>
<dbReference type="Pfam" id="PF00276">
    <property type="entry name" value="Ribosomal_L23"/>
    <property type="match status" value="1"/>
</dbReference>
<dbReference type="SUPFAM" id="SSF54189">
    <property type="entry name" value="Ribosomal proteins S24e, L23 and L15e"/>
    <property type="match status" value="1"/>
</dbReference>
<dbReference type="PROSITE" id="PS00050">
    <property type="entry name" value="RIBOSOMAL_L23"/>
    <property type="match status" value="1"/>
</dbReference>
<name>RL23_SHISS</name>
<protein>
    <recommendedName>
        <fullName evidence="1">Large ribosomal subunit protein uL23</fullName>
    </recommendedName>
    <alternativeName>
        <fullName evidence="2">50S ribosomal protein L23</fullName>
    </alternativeName>
</protein>
<keyword id="KW-1185">Reference proteome</keyword>
<keyword id="KW-0687">Ribonucleoprotein</keyword>
<keyword id="KW-0689">Ribosomal protein</keyword>
<keyword id="KW-0694">RNA-binding</keyword>
<keyword id="KW-0699">rRNA-binding</keyword>
<organism>
    <name type="scientific">Shigella sonnei (strain Ss046)</name>
    <dbReference type="NCBI Taxonomy" id="300269"/>
    <lineage>
        <taxon>Bacteria</taxon>
        <taxon>Pseudomonadati</taxon>
        <taxon>Pseudomonadota</taxon>
        <taxon>Gammaproteobacteria</taxon>
        <taxon>Enterobacterales</taxon>
        <taxon>Enterobacteriaceae</taxon>
        <taxon>Shigella</taxon>
    </lineage>
</organism>
<sequence length="100" mass="11199">MIREERLLKVLRAPHVSEKASTAMEKSNTIVLKVAKDATKAEIKAAVQKLFEVEVEVVNTLVVKGKVKRHGQRIGRRSDWKKAYVTLKEGQNLDFVGGAE</sequence>
<proteinExistence type="inferred from homology"/>
<accession>Q3YWU1</accession>
<comment type="function">
    <text evidence="1">One of the early assembly proteins it binds 23S rRNA. One of the proteins that surrounds the polypeptide exit tunnel on the outside of the ribosome. Forms the main docking site for trigger factor binding to the ribosome.</text>
</comment>
<comment type="subunit">
    <text evidence="1">Part of the 50S ribosomal subunit. Contacts protein L29, and trigger factor when it is bound to the ribosome.</text>
</comment>
<comment type="similarity">
    <text evidence="1">Belongs to the universal ribosomal protein uL23 family.</text>
</comment>
<evidence type="ECO:0000255" key="1">
    <source>
        <dbReference type="HAMAP-Rule" id="MF_01369"/>
    </source>
</evidence>
<evidence type="ECO:0000305" key="2"/>
<reference key="1">
    <citation type="journal article" date="2005" name="Nucleic Acids Res.">
        <title>Genome dynamics and diversity of Shigella species, the etiologic agents of bacillary dysentery.</title>
        <authorList>
            <person name="Yang F."/>
            <person name="Yang J."/>
            <person name="Zhang X."/>
            <person name="Chen L."/>
            <person name="Jiang Y."/>
            <person name="Yan Y."/>
            <person name="Tang X."/>
            <person name="Wang J."/>
            <person name="Xiong Z."/>
            <person name="Dong J."/>
            <person name="Xue Y."/>
            <person name="Zhu Y."/>
            <person name="Xu X."/>
            <person name="Sun L."/>
            <person name="Chen S."/>
            <person name="Nie H."/>
            <person name="Peng J."/>
            <person name="Xu J."/>
            <person name="Wang Y."/>
            <person name="Yuan Z."/>
            <person name="Wen Y."/>
            <person name="Yao Z."/>
            <person name="Shen Y."/>
            <person name="Qiang B."/>
            <person name="Hou Y."/>
            <person name="Yu J."/>
            <person name="Jin Q."/>
        </authorList>
    </citation>
    <scope>NUCLEOTIDE SEQUENCE [LARGE SCALE GENOMIC DNA]</scope>
    <source>
        <strain>Ss046</strain>
    </source>
</reference>
<gene>
    <name evidence="1" type="primary">rplW</name>
    <name type="ordered locus">SSON_3459</name>
</gene>
<feature type="chain" id="PRO_0000272846" description="Large ribosomal subunit protein uL23">
    <location>
        <begin position="1"/>
        <end position="100"/>
    </location>
</feature>